<keyword id="KW-1217">Cell adhesion impairing toxin</keyword>
<keyword id="KW-0903">Direct protein sequencing</keyword>
<keyword id="KW-1015">Disulfide bond</keyword>
<keyword id="KW-1199">Hemostasis impairing toxin</keyword>
<keyword id="KW-1201">Platelet aggregation inhibiting toxin</keyword>
<keyword id="KW-0964">Secreted</keyword>
<keyword id="KW-0800">Toxin</keyword>
<accession>Q7LZK0</accession>
<name>VM2EG_ECHPL</name>
<comment type="function">
    <text evidence="3">Has antiplatelet activities on guinea pig, followed by human, rabbit and rat platelet-rich plasma.</text>
</comment>
<comment type="subunit">
    <text evidence="1">Monomer.</text>
</comment>
<comment type="subcellular location">
    <subcellularLocation>
        <location evidence="3">Secreted</location>
    </subcellularLocation>
</comment>
<comment type="tissue specificity">
    <text evidence="3">Expressed by the venom gland.</text>
</comment>
<comment type="miscellaneous">
    <text>The disintegrin belongs to the short disintegrin subfamily.</text>
</comment>
<comment type="similarity">
    <text evidence="4">Belongs to the venom metalloproteinase (M12B) family. P-II subfamily. P-IIa sub-subfamily.</text>
</comment>
<organism>
    <name type="scientific">Echis pyramidum leakeyi</name>
    <name type="common">Leakey's carpet viper</name>
    <name type="synonym">Echis carinatus leakeyi</name>
    <dbReference type="NCBI Taxonomy" id="38415"/>
    <lineage>
        <taxon>Eukaryota</taxon>
        <taxon>Metazoa</taxon>
        <taxon>Chordata</taxon>
        <taxon>Craniata</taxon>
        <taxon>Vertebrata</taxon>
        <taxon>Euteleostomi</taxon>
        <taxon>Lepidosauria</taxon>
        <taxon>Squamata</taxon>
        <taxon>Bifurcata</taxon>
        <taxon>Unidentata</taxon>
        <taxon>Episquamata</taxon>
        <taxon>Toxicofera</taxon>
        <taxon>Serpentes</taxon>
        <taxon>Colubroidea</taxon>
        <taxon>Viperidae</taxon>
        <taxon>Viperinae</taxon>
        <taxon>Echis</taxon>
    </lineage>
</organism>
<protein>
    <recommendedName>
        <fullName>Disintegrin echistatin-gamma</fullName>
    </recommendedName>
</protein>
<sequence>DCASGPCCRDCKFLEEGTICNMARGDDMDDYCNGKTCDCPRNPHKWPAP</sequence>
<feature type="chain" id="PRO_0000329976" description="Disintegrin echistatin-gamma">
    <location>
        <begin position="1"/>
        <end position="49"/>
    </location>
</feature>
<feature type="domain" description="Disintegrin" evidence="2">
    <location>
        <begin position="1"/>
        <end position="47"/>
    </location>
</feature>
<feature type="short sequence motif" description="Cell attachment site">
    <location>
        <begin position="24"/>
        <end position="26"/>
    </location>
</feature>
<feature type="disulfide bond" evidence="2">
    <location>
        <begin position="2"/>
        <end position="11"/>
    </location>
</feature>
<feature type="disulfide bond" evidence="2">
    <location>
        <begin position="7"/>
        <end position="32"/>
    </location>
</feature>
<feature type="disulfide bond" evidence="2">
    <location>
        <begin position="8"/>
        <end position="37"/>
    </location>
</feature>
<feature type="disulfide bond" evidence="2">
    <location>
        <begin position="20"/>
        <end position="39"/>
    </location>
</feature>
<proteinExistence type="evidence at protein level"/>
<reference key="1">
    <citation type="journal article" date="1995" name="Biochem. J.">
        <title>Determination of the structure of two novel echistatin variants and comparison of the ability of echistatin variants to inhibit aggregation of platelets from different species.</title>
        <authorList>
            <person name="Chen Y.-L."/>
            <person name="Huang T.-F."/>
            <person name="Chen S.-W."/>
            <person name="Tsai I.-H."/>
        </authorList>
    </citation>
    <scope>PROTEIN SEQUENCE</scope>
    <scope>FUNCTION</scope>
    <scope>SUBCELLULAR LOCATION</scope>
    <scope>TISSUE SPECIFICITY</scope>
    <source>
        <tissue>Venom</tissue>
    </source>
</reference>
<dbReference type="PIR" id="S53432">
    <property type="entry name" value="S53432"/>
</dbReference>
<dbReference type="SMR" id="Q7LZK0"/>
<dbReference type="GO" id="GO:0005576">
    <property type="term" value="C:extracellular region"/>
    <property type="evidence" value="ECO:0007669"/>
    <property type="project" value="UniProtKB-SubCell"/>
</dbReference>
<dbReference type="GO" id="GO:0090729">
    <property type="term" value="F:toxin activity"/>
    <property type="evidence" value="ECO:0007669"/>
    <property type="project" value="UniProtKB-KW"/>
</dbReference>
<dbReference type="Gene3D" id="4.10.70.10">
    <property type="entry name" value="Disintegrin domain"/>
    <property type="match status" value="1"/>
</dbReference>
<dbReference type="InterPro" id="IPR018358">
    <property type="entry name" value="Disintegrin_CS"/>
</dbReference>
<dbReference type="InterPro" id="IPR001762">
    <property type="entry name" value="Disintegrin_dom"/>
</dbReference>
<dbReference type="InterPro" id="IPR036436">
    <property type="entry name" value="Disintegrin_dom_sf"/>
</dbReference>
<dbReference type="PRINTS" id="PR00289">
    <property type="entry name" value="DISINTEGRIN"/>
</dbReference>
<dbReference type="SMART" id="SM00050">
    <property type="entry name" value="DISIN"/>
    <property type="match status" value="1"/>
</dbReference>
<dbReference type="SUPFAM" id="SSF57552">
    <property type="entry name" value="Blood coagulation inhibitor (disintegrin)"/>
    <property type="match status" value="1"/>
</dbReference>
<dbReference type="PROSITE" id="PS00427">
    <property type="entry name" value="DISINTEGRIN_1"/>
    <property type="match status" value="1"/>
</dbReference>
<dbReference type="PROSITE" id="PS50214">
    <property type="entry name" value="DISINTEGRIN_2"/>
    <property type="match status" value="1"/>
</dbReference>
<evidence type="ECO:0000250" key="1"/>
<evidence type="ECO:0000255" key="2">
    <source>
        <dbReference type="PROSITE-ProRule" id="PRU00068"/>
    </source>
</evidence>
<evidence type="ECO:0000269" key="3">
    <source>
    </source>
</evidence>
<evidence type="ECO:0000305" key="4"/>